<comment type="function">
    <text evidence="1">Required for the first step of histidine biosynthesis. May allow the feedback regulation of ATP phosphoribosyltransferase activity by histidine.</text>
</comment>
<comment type="pathway">
    <text evidence="1">Amino-acid biosynthesis; L-histidine biosynthesis; L-histidine from 5-phospho-alpha-D-ribose 1-diphosphate: step 1/9.</text>
</comment>
<comment type="subunit">
    <text evidence="1">Heteromultimer composed of HisG and HisZ subunits.</text>
</comment>
<comment type="subcellular location">
    <subcellularLocation>
        <location evidence="1">Cytoplasm</location>
    </subcellularLocation>
</comment>
<comment type="miscellaneous">
    <text>This function is generally fulfilled by the C-terminal part of HisG, which is missing in some bacteria such as this one.</text>
</comment>
<comment type="similarity">
    <text evidence="1">Belongs to the class-II aminoacyl-tRNA synthetase family. HisZ subfamily.</text>
</comment>
<organism>
    <name type="scientific">Brucella suis (strain ATCC 23445 / NCTC 10510)</name>
    <dbReference type="NCBI Taxonomy" id="470137"/>
    <lineage>
        <taxon>Bacteria</taxon>
        <taxon>Pseudomonadati</taxon>
        <taxon>Pseudomonadota</taxon>
        <taxon>Alphaproteobacteria</taxon>
        <taxon>Hyphomicrobiales</taxon>
        <taxon>Brucellaceae</taxon>
        <taxon>Brucella/Ochrobactrum group</taxon>
        <taxon>Brucella</taxon>
    </lineage>
</organism>
<keyword id="KW-0028">Amino-acid biosynthesis</keyword>
<keyword id="KW-0963">Cytoplasm</keyword>
<keyword id="KW-0368">Histidine biosynthesis</keyword>
<evidence type="ECO:0000255" key="1">
    <source>
        <dbReference type="HAMAP-Rule" id="MF_00125"/>
    </source>
</evidence>
<gene>
    <name evidence="1" type="primary">hisZ</name>
    <name type="ordered locus">BSUIS_B0191</name>
</gene>
<dbReference type="EMBL" id="CP000912">
    <property type="protein sequence ID" value="ABY39210.1"/>
    <property type="molecule type" value="Genomic_DNA"/>
</dbReference>
<dbReference type="RefSeq" id="WP_005971898.1">
    <property type="nucleotide sequence ID" value="NC_010167.1"/>
</dbReference>
<dbReference type="SMR" id="A9WXP4"/>
<dbReference type="KEGG" id="bmt:BSUIS_B0191"/>
<dbReference type="HOGENOM" id="CLU_025113_6_0_5"/>
<dbReference type="UniPathway" id="UPA00031">
    <property type="reaction ID" value="UER00006"/>
</dbReference>
<dbReference type="Proteomes" id="UP000008545">
    <property type="component" value="Chromosome II"/>
</dbReference>
<dbReference type="GO" id="GO:0005737">
    <property type="term" value="C:cytoplasm"/>
    <property type="evidence" value="ECO:0007669"/>
    <property type="project" value="UniProtKB-SubCell"/>
</dbReference>
<dbReference type="GO" id="GO:0004821">
    <property type="term" value="F:histidine-tRNA ligase activity"/>
    <property type="evidence" value="ECO:0007669"/>
    <property type="project" value="TreeGrafter"/>
</dbReference>
<dbReference type="GO" id="GO:0006427">
    <property type="term" value="P:histidyl-tRNA aminoacylation"/>
    <property type="evidence" value="ECO:0007669"/>
    <property type="project" value="TreeGrafter"/>
</dbReference>
<dbReference type="GO" id="GO:0000105">
    <property type="term" value="P:L-histidine biosynthetic process"/>
    <property type="evidence" value="ECO:0007669"/>
    <property type="project" value="UniProtKB-UniRule"/>
</dbReference>
<dbReference type="Gene3D" id="3.30.930.10">
    <property type="entry name" value="Bira Bifunctional Protein, Domain 2"/>
    <property type="match status" value="1"/>
</dbReference>
<dbReference type="HAMAP" id="MF_00125">
    <property type="entry name" value="HisZ"/>
    <property type="match status" value="1"/>
</dbReference>
<dbReference type="InterPro" id="IPR045864">
    <property type="entry name" value="aa-tRNA-synth_II/BPL/LPL"/>
</dbReference>
<dbReference type="InterPro" id="IPR041715">
    <property type="entry name" value="HisRS-like_core"/>
</dbReference>
<dbReference type="InterPro" id="IPR004516">
    <property type="entry name" value="HisRS/HisZ"/>
</dbReference>
<dbReference type="InterPro" id="IPR004517">
    <property type="entry name" value="HisZ"/>
</dbReference>
<dbReference type="NCBIfam" id="NF008948">
    <property type="entry name" value="PRK12295.1-1"/>
    <property type="match status" value="1"/>
</dbReference>
<dbReference type="NCBIfam" id="NF008951">
    <property type="entry name" value="PRK12295.1-4"/>
    <property type="match status" value="1"/>
</dbReference>
<dbReference type="PANTHER" id="PTHR43707:SF1">
    <property type="entry name" value="HISTIDINE--TRNA LIGASE, MITOCHONDRIAL-RELATED"/>
    <property type="match status" value="1"/>
</dbReference>
<dbReference type="PANTHER" id="PTHR43707">
    <property type="entry name" value="HISTIDYL-TRNA SYNTHETASE"/>
    <property type="match status" value="1"/>
</dbReference>
<dbReference type="Pfam" id="PF13393">
    <property type="entry name" value="tRNA-synt_His"/>
    <property type="match status" value="2"/>
</dbReference>
<dbReference type="PIRSF" id="PIRSF001549">
    <property type="entry name" value="His-tRNA_synth"/>
    <property type="match status" value="1"/>
</dbReference>
<dbReference type="SUPFAM" id="SSF55681">
    <property type="entry name" value="Class II aaRS and biotin synthetases"/>
    <property type="match status" value="1"/>
</dbReference>
<reference key="1">
    <citation type="submission" date="2007-12" db="EMBL/GenBank/DDBJ databases">
        <title>Brucella suis ATCC 23445 whole genome shotgun sequencing project.</title>
        <authorList>
            <person name="Setubal J.C."/>
            <person name="Bowns C."/>
            <person name="Boyle S."/>
            <person name="Crasta O.R."/>
            <person name="Czar M.J."/>
            <person name="Dharmanolla C."/>
            <person name="Gillespie J.J."/>
            <person name="Kenyon R.W."/>
            <person name="Lu J."/>
            <person name="Mane S."/>
            <person name="Mohapatra S."/>
            <person name="Nagrani S."/>
            <person name="Purkayastha A."/>
            <person name="Rajasimha H.K."/>
            <person name="Shallom J.M."/>
            <person name="Shallom S."/>
            <person name="Shukla M."/>
            <person name="Snyder E.E."/>
            <person name="Sobral B.W."/>
            <person name="Wattam A.R."/>
            <person name="Will R."/>
            <person name="Williams K."/>
            <person name="Yoo H."/>
            <person name="Bruce D."/>
            <person name="Detter C."/>
            <person name="Munk C."/>
            <person name="Brettin T.S."/>
        </authorList>
    </citation>
    <scope>NUCLEOTIDE SEQUENCE [LARGE SCALE GENOMIC DNA]</scope>
    <source>
        <strain>ATCC 23445 / NCTC 10510</strain>
    </source>
</reference>
<proteinExistence type="inferred from homology"/>
<sequence>MVGSRTSPIFNALRVELNAREAELVEIPLIQPADPFLDMAGEDLRRRIFLTENENGDSLCLRPEFTIPVCRNHIALNAATPKRYAYLGEVFRQRRDGAAEFLQAGIEDLGAADEAASDARSLADALSCVKAIAPDAPLEIVLGDQSVFAGMLKALGLPQGWRKKLLRSFGDAHSMDLALAELTGTQRRDPLPESLAVLVAEGDEIGLARMLEAEMLEAGISPGAGRTPVEIARRLIEKEDLAATHFPAAALDLLRQFLAIRVSLDTAAVTLRAFAADNALDLGAVLQKFEARADAIAQAGIEMKDIIYDASFGRPLDYYTGLVYEIRDASNRQDGVLAGGGRYDRLLTMLGACEAIPGVGFSIWLDRLQALAGEKQ</sequence>
<name>HISZ_BRUSI</name>
<protein>
    <recommendedName>
        <fullName evidence="1">ATP phosphoribosyltransferase regulatory subunit</fullName>
    </recommendedName>
</protein>
<accession>A9WXP4</accession>
<feature type="chain" id="PRO_1000076243" description="ATP phosphoribosyltransferase regulatory subunit">
    <location>
        <begin position="1"/>
        <end position="376"/>
    </location>
</feature>